<feature type="chain" id="PRO_0000303628" description="tRNA N6-adenosine threonylcarbamoyltransferase">
    <location>
        <begin position="1"/>
        <end position="337"/>
    </location>
</feature>
<feature type="binding site" evidence="1">
    <location>
        <position position="111"/>
    </location>
    <ligand>
        <name>Fe cation</name>
        <dbReference type="ChEBI" id="CHEBI:24875"/>
    </ligand>
</feature>
<feature type="binding site" evidence="1">
    <location>
        <position position="115"/>
    </location>
    <ligand>
        <name>Fe cation</name>
        <dbReference type="ChEBI" id="CHEBI:24875"/>
    </ligand>
</feature>
<feature type="binding site" evidence="1">
    <location>
        <begin position="134"/>
        <end position="138"/>
    </location>
    <ligand>
        <name>substrate</name>
    </ligand>
</feature>
<feature type="binding site" evidence="1">
    <location>
        <position position="167"/>
    </location>
    <ligand>
        <name>substrate</name>
    </ligand>
</feature>
<feature type="binding site" evidence="1">
    <location>
        <position position="180"/>
    </location>
    <ligand>
        <name>substrate</name>
    </ligand>
</feature>
<feature type="binding site" evidence="1">
    <location>
        <position position="272"/>
    </location>
    <ligand>
        <name>substrate</name>
    </ligand>
</feature>
<feature type="binding site" evidence="1">
    <location>
        <position position="300"/>
    </location>
    <ligand>
        <name>Fe cation</name>
        <dbReference type="ChEBI" id="CHEBI:24875"/>
    </ligand>
</feature>
<evidence type="ECO:0000255" key="1">
    <source>
        <dbReference type="HAMAP-Rule" id="MF_01445"/>
    </source>
</evidence>
<organism>
    <name type="scientific">Yersinia pseudotuberculosis serotype I (strain IP32953)</name>
    <dbReference type="NCBI Taxonomy" id="273123"/>
    <lineage>
        <taxon>Bacteria</taxon>
        <taxon>Pseudomonadati</taxon>
        <taxon>Pseudomonadota</taxon>
        <taxon>Gammaproteobacteria</taxon>
        <taxon>Enterobacterales</taxon>
        <taxon>Yersiniaceae</taxon>
        <taxon>Yersinia</taxon>
    </lineage>
</organism>
<gene>
    <name evidence="1" type="primary">tsaD</name>
    <name type="synonym">gcp</name>
    <name type="ordered locus">YPTB3415</name>
</gene>
<keyword id="KW-0012">Acyltransferase</keyword>
<keyword id="KW-0963">Cytoplasm</keyword>
<keyword id="KW-0408">Iron</keyword>
<keyword id="KW-0479">Metal-binding</keyword>
<keyword id="KW-0808">Transferase</keyword>
<keyword id="KW-0819">tRNA processing</keyword>
<accession>Q665U5</accession>
<name>TSAD_YERPS</name>
<comment type="function">
    <text evidence="1">Required for the formation of a threonylcarbamoyl group on adenosine at position 37 (t(6)A37) in tRNAs that read codons beginning with adenine. Is involved in the transfer of the threonylcarbamoyl moiety of threonylcarbamoyl-AMP (TC-AMP) to the N6 group of A37, together with TsaE and TsaB. TsaD likely plays a direct catalytic role in this reaction.</text>
</comment>
<comment type="catalytic activity">
    <reaction evidence="1">
        <text>L-threonylcarbamoyladenylate + adenosine(37) in tRNA = N(6)-L-threonylcarbamoyladenosine(37) in tRNA + AMP + H(+)</text>
        <dbReference type="Rhea" id="RHEA:37059"/>
        <dbReference type="Rhea" id="RHEA-COMP:10162"/>
        <dbReference type="Rhea" id="RHEA-COMP:10163"/>
        <dbReference type="ChEBI" id="CHEBI:15378"/>
        <dbReference type="ChEBI" id="CHEBI:73682"/>
        <dbReference type="ChEBI" id="CHEBI:74411"/>
        <dbReference type="ChEBI" id="CHEBI:74418"/>
        <dbReference type="ChEBI" id="CHEBI:456215"/>
        <dbReference type="EC" id="2.3.1.234"/>
    </reaction>
</comment>
<comment type="cofactor">
    <cofactor evidence="1">
        <name>Fe(2+)</name>
        <dbReference type="ChEBI" id="CHEBI:29033"/>
    </cofactor>
    <text evidence="1">Binds 1 Fe(2+) ion per subunit.</text>
</comment>
<comment type="subcellular location">
    <subcellularLocation>
        <location evidence="1">Cytoplasm</location>
    </subcellularLocation>
</comment>
<comment type="similarity">
    <text evidence="1">Belongs to the KAE1 / TsaD family.</text>
</comment>
<sequence>MRVLGIETSCDETGIAVYDDKAGLLANQLYSQVKLHADYGGVVPELASRDHVRKTVPLIQAALKEANLSAKDIDAVAYTAGPGLVGALLVGATIGRALAFAWGVPAVPVHHMEGHLLAPMLEENAPEFPFVALLVSGGHTQLISVTGIGEYLLLGESVDDAAGEAFDKTAKLLGLDYPGGPMLSRMAQQGTVGRFTFPRPMTDRPGLDFSFSGLKTFAANTIRANGDDDQTRADIARAFEDAVVDTLAIKSKRALDQTGFKRLVIAGGVSANQTLRLKLADMMQKRGGEVFYARPEFCTDNGAMIAYAGMVRLRSNLNSELSVSVRPRWPLSELPKV</sequence>
<proteinExistence type="inferred from homology"/>
<reference key="1">
    <citation type="journal article" date="2004" name="Proc. Natl. Acad. Sci. U.S.A.">
        <title>Insights into the evolution of Yersinia pestis through whole-genome comparison with Yersinia pseudotuberculosis.</title>
        <authorList>
            <person name="Chain P.S.G."/>
            <person name="Carniel E."/>
            <person name="Larimer F.W."/>
            <person name="Lamerdin J."/>
            <person name="Stoutland P.O."/>
            <person name="Regala W.M."/>
            <person name="Georgescu A.M."/>
            <person name="Vergez L.M."/>
            <person name="Land M.L."/>
            <person name="Motin V.L."/>
            <person name="Brubaker R.R."/>
            <person name="Fowler J."/>
            <person name="Hinnebusch J."/>
            <person name="Marceau M."/>
            <person name="Medigue C."/>
            <person name="Simonet M."/>
            <person name="Chenal-Francisque V."/>
            <person name="Souza B."/>
            <person name="Dacheux D."/>
            <person name="Elliott J.M."/>
            <person name="Derbise A."/>
            <person name="Hauser L.J."/>
            <person name="Garcia E."/>
        </authorList>
    </citation>
    <scope>NUCLEOTIDE SEQUENCE [LARGE SCALE GENOMIC DNA]</scope>
    <source>
        <strain>IP32953</strain>
    </source>
</reference>
<protein>
    <recommendedName>
        <fullName evidence="1">tRNA N6-adenosine threonylcarbamoyltransferase</fullName>
        <ecNumber evidence="1">2.3.1.234</ecNumber>
    </recommendedName>
    <alternativeName>
        <fullName evidence="1">N6-L-threonylcarbamoyladenine synthase</fullName>
        <shortName evidence="1">t(6)A synthase</shortName>
    </alternativeName>
    <alternativeName>
        <fullName evidence="1">t(6)A37 threonylcarbamoyladenosine biosynthesis protein TsaD</fullName>
    </alternativeName>
    <alternativeName>
        <fullName evidence="1">tRNA threonylcarbamoyladenosine biosynthesis protein TsaD</fullName>
    </alternativeName>
</protein>
<dbReference type="EC" id="2.3.1.234" evidence="1"/>
<dbReference type="EMBL" id="BX936398">
    <property type="protein sequence ID" value="CAH22653.1"/>
    <property type="molecule type" value="Genomic_DNA"/>
</dbReference>
<dbReference type="RefSeq" id="WP_002212201.1">
    <property type="nucleotide sequence ID" value="NZ_CP009712.1"/>
</dbReference>
<dbReference type="SMR" id="Q665U5"/>
<dbReference type="GeneID" id="57973978"/>
<dbReference type="KEGG" id="ypo:BZ17_3193"/>
<dbReference type="KEGG" id="yps:YPTB3415"/>
<dbReference type="PATRIC" id="fig|273123.14.peg.3344"/>
<dbReference type="Proteomes" id="UP000001011">
    <property type="component" value="Chromosome"/>
</dbReference>
<dbReference type="GO" id="GO:0005737">
    <property type="term" value="C:cytoplasm"/>
    <property type="evidence" value="ECO:0007669"/>
    <property type="project" value="UniProtKB-SubCell"/>
</dbReference>
<dbReference type="GO" id="GO:0005506">
    <property type="term" value="F:iron ion binding"/>
    <property type="evidence" value="ECO:0007669"/>
    <property type="project" value="UniProtKB-UniRule"/>
</dbReference>
<dbReference type="GO" id="GO:0061711">
    <property type="term" value="F:N(6)-L-threonylcarbamoyladenine synthase activity"/>
    <property type="evidence" value="ECO:0007669"/>
    <property type="project" value="UniProtKB-EC"/>
</dbReference>
<dbReference type="GO" id="GO:0002949">
    <property type="term" value="P:tRNA threonylcarbamoyladenosine modification"/>
    <property type="evidence" value="ECO:0007669"/>
    <property type="project" value="UniProtKB-UniRule"/>
</dbReference>
<dbReference type="CDD" id="cd24133">
    <property type="entry name" value="ASKHA_NBD_TsaD_bac"/>
    <property type="match status" value="1"/>
</dbReference>
<dbReference type="FunFam" id="3.30.420.40:FF:000031">
    <property type="entry name" value="tRNA N6-adenosine threonylcarbamoyltransferase"/>
    <property type="match status" value="1"/>
</dbReference>
<dbReference type="Gene3D" id="3.30.420.40">
    <property type="match status" value="2"/>
</dbReference>
<dbReference type="HAMAP" id="MF_01445">
    <property type="entry name" value="TsaD"/>
    <property type="match status" value="1"/>
</dbReference>
<dbReference type="InterPro" id="IPR043129">
    <property type="entry name" value="ATPase_NBD"/>
</dbReference>
<dbReference type="InterPro" id="IPR000905">
    <property type="entry name" value="Gcp-like_dom"/>
</dbReference>
<dbReference type="InterPro" id="IPR017861">
    <property type="entry name" value="KAE1/TsaD"/>
</dbReference>
<dbReference type="InterPro" id="IPR017860">
    <property type="entry name" value="Peptidase_M22_CS"/>
</dbReference>
<dbReference type="InterPro" id="IPR022450">
    <property type="entry name" value="TsaD"/>
</dbReference>
<dbReference type="NCBIfam" id="TIGR00329">
    <property type="entry name" value="gcp_kae1"/>
    <property type="match status" value="1"/>
</dbReference>
<dbReference type="NCBIfam" id="TIGR03723">
    <property type="entry name" value="T6A_TsaD_YgjD"/>
    <property type="match status" value="1"/>
</dbReference>
<dbReference type="PANTHER" id="PTHR11735">
    <property type="entry name" value="TRNA N6-ADENOSINE THREONYLCARBAMOYLTRANSFERASE"/>
    <property type="match status" value="1"/>
</dbReference>
<dbReference type="PANTHER" id="PTHR11735:SF6">
    <property type="entry name" value="TRNA N6-ADENOSINE THREONYLCARBAMOYLTRANSFERASE, MITOCHONDRIAL"/>
    <property type="match status" value="1"/>
</dbReference>
<dbReference type="Pfam" id="PF00814">
    <property type="entry name" value="TsaD"/>
    <property type="match status" value="1"/>
</dbReference>
<dbReference type="PRINTS" id="PR00789">
    <property type="entry name" value="OSIALOPTASE"/>
</dbReference>
<dbReference type="SUPFAM" id="SSF53067">
    <property type="entry name" value="Actin-like ATPase domain"/>
    <property type="match status" value="1"/>
</dbReference>
<dbReference type="PROSITE" id="PS01016">
    <property type="entry name" value="GLYCOPROTEASE"/>
    <property type="match status" value="1"/>
</dbReference>